<sequence length="338" mass="35983">MVTYSESGVDIDLEELTVSSLTSRLSDTLKYCDVITGAGHFAALVRMGDVAIAMSTDGVGSKILVAEMMNRYDTVGIDCIAMVVNDILCVGARPAALVDYLAVERPDPEVAGEIGKGLAMGAEMARVAIIGGETASLPGIIRNLDLAATGIGFVDVDRIITGEDVSPGDTVIGLESSGIHSNGLSLARRVFFDELELSPEDEMPGSSSSVGDELLRPTRIYVEPIMELIESDVDVHGLAHITGGGFGNLKRLRKDVGYRLDSLPEPQQIFRVIHEAGVDIREMYRVFNMGVGFCAVVAPDDVDEALSILGDRAHPIGEVTDRGSEVELEACTGETIKL</sequence>
<keyword id="KW-0067">ATP-binding</keyword>
<keyword id="KW-0963">Cytoplasm</keyword>
<keyword id="KW-0436">Ligase</keyword>
<keyword id="KW-0547">Nucleotide-binding</keyword>
<keyword id="KW-0658">Purine biosynthesis</keyword>
<keyword id="KW-1185">Reference proteome</keyword>
<organism>
    <name type="scientific">Methanothermobacter thermautotrophicus (strain ATCC 29096 / DSM 1053 / JCM 10044 / NBRC 100330 / Delta H)</name>
    <name type="common">Methanobacterium thermoautotrophicum</name>
    <dbReference type="NCBI Taxonomy" id="187420"/>
    <lineage>
        <taxon>Archaea</taxon>
        <taxon>Methanobacteriati</taxon>
        <taxon>Methanobacteriota</taxon>
        <taxon>Methanomada group</taxon>
        <taxon>Methanobacteria</taxon>
        <taxon>Methanobacteriales</taxon>
        <taxon>Methanobacteriaceae</taxon>
        <taxon>Methanothermobacter</taxon>
    </lineage>
</organism>
<evidence type="ECO:0000250" key="1"/>
<evidence type="ECO:0000305" key="2"/>
<proteinExistence type="inferred from homology"/>
<dbReference type="EC" id="6.3.3.1"/>
<dbReference type="EMBL" id="AE000666">
    <property type="protein sequence ID" value="AAB85693.1"/>
    <property type="molecule type" value="Genomic_DNA"/>
</dbReference>
<dbReference type="PIR" id="G69027">
    <property type="entry name" value="G69027"/>
</dbReference>
<dbReference type="RefSeq" id="WP_010876828.1">
    <property type="nucleotide sequence ID" value="NC_000916.1"/>
</dbReference>
<dbReference type="SMR" id="O27272"/>
<dbReference type="FunCoup" id="O27272">
    <property type="interactions" value="125"/>
</dbReference>
<dbReference type="STRING" id="187420.MTH_1204"/>
<dbReference type="PaxDb" id="187420-MTH_1204"/>
<dbReference type="EnsemblBacteria" id="AAB85693">
    <property type="protein sequence ID" value="AAB85693"/>
    <property type="gene ID" value="MTH_1204"/>
</dbReference>
<dbReference type="GeneID" id="1471612"/>
<dbReference type="GeneID" id="77401732"/>
<dbReference type="KEGG" id="mth:MTH_1204"/>
<dbReference type="PATRIC" id="fig|187420.15.peg.1182"/>
<dbReference type="HOGENOM" id="CLU_047116_0_0_2"/>
<dbReference type="InParanoid" id="O27272"/>
<dbReference type="UniPathway" id="UPA00074">
    <property type="reaction ID" value="UER00129"/>
</dbReference>
<dbReference type="Proteomes" id="UP000005223">
    <property type="component" value="Chromosome"/>
</dbReference>
<dbReference type="GO" id="GO:0005829">
    <property type="term" value="C:cytosol"/>
    <property type="evidence" value="ECO:0007669"/>
    <property type="project" value="TreeGrafter"/>
</dbReference>
<dbReference type="GO" id="GO:0005524">
    <property type="term" value="F:ATP binding"/>
    <property type="evidence" value="ECO:0007669"/>
    <property type="project" value="UniProtKB-KW"/>
</dbReference>
<dbReference type="GO" id="GO:0004637">
    <property type="term" value="F:phosphoribosylamine-glycine ligase activity"/>
    <property type="evidence" value="ECO:0007669"/>
    <property type="project" value="TreeGrafter"/>
</dbReference>
<dbReference type="GO" id="GO:0004641">
    <property type="term" value="F:phosphoribosylformylglycinamidine cyclo-ligase activity"/>
    <property type="evidence" value="ECO:0007669"/>
    <property type="project" value="UniProtKB-UniRule"/>
</dbReference>
<dbReference type="GO" id="GO:0006189">
    <property type="term" value="P:'de novo' IMP biosynthetic process"/>
    <property type="evidence" value="ECO:0007669"/>
    <property type="project" value="UniProtKB-UniRule"/>
</dbReference>
<dbReference type="GO" id="GO:0046084">
    <property type="term" value="P:adenine biosynthetic process"/>
    <property type="evidence" value="ECO:0007669"/>
    <property type="project" value="TreeGrafter"/>
</dbReference>
<dbReference type="CDD" id="cd02196">
    <property type="entry name" value="PurM"/>
    <property type="match status" value="1"/>
</dbReference>
<dbReference type="FunFam" id="3.30.1330.10:FF:000020">
    <property type="entry name" value="Phosphoribosylformylglycinamidine cyclo-ligase"/>
    <property type="match status" value="1"/>
</dbReference>
<dbReference type="FunFam" id="3.90.650.10:FF:000011">
    <property type="entry name" value="Phosphoribosylformylglycinamidine cyclo-ligase"/>
    <property type="match status" value="1"/>
</dbReference>
<dbReference type="Gene3D" id="3.90.650.10">
    <property type="entry name" value="PurM-like C-terminal domain"/>
    <property type="match status" value="1"/>
</dbReference>
<dbReference type="Gene3D" id="3.30.1330.10">
    <property type="entry name" value="PurM-like, N-terminal domain"/>
    <property type="match status" value="1"/>
</dbReference>
<dbReference type="HAMAP" id="MF_00741">
    <property type="entry name" value="AIRS"/>
    <property type="match status" value="1"/>
</dbReference>
<dbReference type="InterPro" id="IPR010918">
    <property type="entry name" value="PurM-like_C_dom"/>
</dbReference>
<dbReference type="InterPro" id="IPR036676">
    <property type="entry name" value="PurM-like_C_sf"/>
</dbReference>
<dbReference type="InterPro" id="IPR016188">
    <property type="entry name" value="PurM-like_N"/>
</dbReference>
<dbReference type="InterPro" id="IPR036921">
    <property type="entry name" value="PurM-like_N_sf"/>
</dbReference>
<dbReference type="InterPro" id="IPR004733">
    <property type="entry name" value="PurM_cligase"/>
</dbReference>
<dbReference type="NCBIfam" id="TIGR00878">
    <property type="entry name" value="purM"/>
    <property type="match status" value="1"/>
</dbReference>
<dbReference type="PANTHER" id="PTHR10520:SF12">
    <property type="entry name" value="TRIFUNCTIONAL PURINE BIOSYNTHETIC PROTEIN ADENOSINE-3"/>
    <property type="match status" value="1"/>
</dbReference>
<dbReference type="PANTHER" id="PTHR10520">
    <property type="entry name" value="TRIFUNCTIONAL PURINE BIOSYNTHETIC PROTEIN ADENOSINE-3-RELATED"/>
    <property type="match status" value="1"/>
</dbReference>
<dbReference type="Pfam" id="PF00586">
    <property type="entry name" value="AIRS"/>
    <property type="match status" value="1"/>
</dbReference>
<dbReference type="Pfam" id="PF02769">
    <property type="entry name" value="AIRS_C"/>
    <property type="match status" value="1"/>
</dbReference>
<dbReference type="SUPFAM" id="SSF56042">
    <property type="entry name" value="PurM C-terminal domain-like"/>
    <property type="match status" value="1"/>
</dbReference>
<dbReference type="SUPFAM" id="SSF55326">
    <property type="entry name" value="PurM N-terminal domain-like"/>
    <property type="match status" value="1"/>
</dbReference>
<feature type="chain" id="PRO_0000148284" description="Phosphoribosylformylglycinamidine cyclo-ligase">
    <location>
        <begin position="1"/>
        <end position="338"/>
    </location>
</feature>
<gene>
    <name type="primary">purM</name>
    <name type="ordered locus">MTH_1204</name>
</gene>
<comment type="catalytic activity">
    <reaction>
        <text>2-formamido-N(1)-(5-O-phospho-beta-D-ribosyl)acetamidine + ATP = 5-amino-1-(5-phospho-beta-D-ribosyl)imidazole + ADP + phosphate + H(+)</text>
        <dbReference type="Rhea" id="RHEA:23032"/>
        <dbReference type="ChEBI" id="CHEBI:15378"/>
        <dbReference type="ChEBI" id="CHEBI:30616"/>
        <dbReference type="ChEBI" id="CHEBI:43474"/>
        <dbReference type="ChEBI" id="CHEBI:137981"/>
        <dbReference type="ChEBI" id="CHEBI:147287"/>
        <dbReference type="ChEBI" id="CHEBI:456216"/>
        <dbReference type="EC" id="6.3.3.1"/>
    </reaction>
</comment>
<comment type="pathway">
    <text>Purine metabolism; IMP biosynthesis via de novo pathway; 5-amino-1-(5-phospho-D-ribosyl)imidazole from N(2)-formyl-N(1)-(5-phospho-D-ribosyl)glycinamide: step 2/2.</text>
</comment>
<comment type="subcellular location">
    <subcellularLocation>
        <location evidence="1">Cytoplasm</location>
    </subcellularLocation>
</comment>
<comment type="similarity">
    <text evidence="2">Belongs to the AIR synthase family.</text>
</comment>
<name>PUR5_METTH</name>
<reference key="1">
    <citation type="journal article" date="1997" name="J. Bacteriol.">
        <title>Complete genome sequence of Methanobacterium thermoautotrophicum deltaH: functional analysis and comparative genomics.</title>
        <authorList>
            <person name="Smith D.R."/>
            <person name="Doucette-Stamm L.A."/>
            <person name="Deloughery C."/>
            <person name="Lee H.-M."/>
            <person name="Dubois J."/>
            <person name="Aldredge T."/>
            <person name="Bashirzadeh R."/>
            <person name="Blakely D."/>
            <person name="Cook R."/>
            <person name="Gilbert K."/>
            <person name="Harrison D."/>
            <person name="Hoang L."/>
            <person name="Keagle P."/>
            <person name="Lumm W."/>
            <person name="Pothier B."/>
            <person name="Qiu D."/>
            <person name="Spadafora R."/>
            <person name="Vicare R."/>
            <person name="Wang Y."/>
            <person name="Wierzbowski J."/>
            <person name="Gibson R."/>
            <person name="Jiwani N."/>
            <person name="Caruso A."/>
            <person name="Bush D."/>
            <person name="Safer H."/>
            <person name="Patwell D."/>
            <person name="Prabhakar S."/>
            <person name="McDougall S."/>
            <person name="Shimer G."/>
            <person name="Goyal A."/>
            <person name="Pietrovski S."/>
            <person name="Church G.M."/>
            <person name="Daniels C.J."/>
            <person name="Mao J.-I."/>
            <person name="Rice P."/>
            <person name="Noelling J."/>
            <person name="Reeve J.N."/>
        </authorList>
    </citation>
    <scope>NUCLEOTIDE SEQUENCE [LARGE SCALE GENOMIC DNA]</scope>
    <source>
        <strain>ATCC 29096 / DSM 1053 / JCM 10044 / NBRC 100330 / Delta H</strain>
    </source>
</reference>
<protein>
    <recommendedName>
        <fullName>Phosphoribosylformylglycinamidine cyclo-ligase</fullName>
        <ecNumber>6.3.3.1</ecNumber>
    </recommendedName>
    <alternativeName>
        <fullName>AIR synthase</fullName>
    </alternativeName>
    <alternativeName>
        <fullName>AIRS</fullName>
    </alternativeName>
    <alternativeName>
        <fullName>Phosphoribosyl-aminoimidazole synthetase</fullName>
    </alternativeName>
</protein>
<accession>O27272</accession>